<gene>
    <name evidence="1" type="primary">rplR</name>
    <name type="ordered locus">Kole_1886</name>
</gene>
<organism>
    <name type="scientific">Kosmotoga olearia (strain ATCC BAA-1733 / DSM 21960 / TBF 19.5.1)</name>
    <dbReference type="NCBI Taxonomy" id="521045"/>
    <lineage>
        <taxon>Bacteria</taxon>
        <taxon>Thermotogati</taxon>
        <taxon>Thermotogota</taxon>
        <taxon>Thermotogae</taxon>
        <taxon>Kosmotogales</taxon>
        <taxon>Kosmotogaceae</taxon>
        <taxon>Kosmotoga</taxon>
    </lineage>
</organism>
<proteinExistence type="inferred from homology"/>
<keyword id="KW-1185">Reference proteome</keyword>
<keyword id="KW-0687">Ribonucleoprotein</keyword>
<keyword id="KW-0689">Ribosomal protein</keyword>
<keyword id="KW-0694">RNA-binding</keyword>
<keyword id="KW-0699">rRNA-binding</keyword>
<reference key="1">
    <citation type="submission" date="2009-06" db="EMBL/GenBank/DDBJ databases">
        <title>Complete sequence of Thermotogales bacterium TBF 19.5.1.</title>
        <authorList>
            <consortium name="US DOE Joint Genome Institute"/>
            <person name="Lucas S."/>
            <person name="Copeland A."/>
            <person name="Lapidus A."/>
            <person name="Glavina del Rio T."/>
            <person name="Tice H."/>
            <person name="Bruce D."/>
            <person name="Goodwin L."/>
            <person name="Pitluck S."/>
            <person name="Chertkov O."/>
            <person name="Brettin T."/>
            <person name="Detter J.C."/>
            <person name="Han C."/>
            <person name="Schmutz J."/>
            <person name="Larimer F."/>
            <person name="Land M."/>
            <person name="Hauser L."/>
            <person name="Kyrpides N."/>
            <person name="Ovchinnikova G."/>
            <person name="Noll K."/>
        </authorList>
    </citation>
    <scope>NUCLEOTIDE SEQUENCE [LARGE SCALE GENOMIC DNA]</scope>
    <source>
        <strain>ATCC BAA-1733 / DSM 21960 / TBF 19.5.1</strain>
    </source>
</reference>
<feature type="chain" id="PRO_1000214677" description="Large ribosomal subunit protein uL18">
    <location>
        <begin position="1"/>
        <end position="122"/>
    </location>
</feature>
<accession>C5CGI6</accession>
<evidence type="ECO:0000255" key="1">
    <source>
        <dbReference type="HAMAP-Rule" id="MF_01337"/>
    </source>
</evidence>
<evidence type="ECO:0000305" key="2"/>
<name>RL18_KOSOT</name>
<comment type="function">
    <text evidence="1">This is one of the proteins that bind and probably mediate the attachment of the 5S RNA into the large ribosomal subunit, where it forms part of the central protuberance.</text>
</comment>
<comment type="subunit">
    <text evidence="1">Part of the 50S ribosomal subunit; part of the 5S rRNA/L5/L18/L25 subcomplex. Contacts the 5S and 23S rRNAs.</text>
</comment>
<comment type="similarity">
    <text evidence="1">Belongs to the universal ribosomal protein uL18 family.</text>
</comment>
<sequence>MIKRRDRKELRRKRHLRVRSKIKGTPERPRLAVYRSERHIYAQIIDDIAGRTIVSASTVDKELREKLTKTWNQEAAKEVGKLIAKRAAEKGIKKIVFDRGGFKFHGRIKSLADAAREAGLEF</sequence>
<protein>
    <recommendedName>
        <fullName evidence="1">Large ribosomal subunit protein uL18</fullName>
    </recommendedName>
    <alternativeName>
        <fullName evidence="2">50S ribosomal protein L18</fullName>
    </alternativeName>
</protein>
<dbReference type="EMBL" id="CP001634">
    <property type="protein sequence ID" value="ACR80567.1"/>
    <property type="molecule type" value="Genomic_DNA"/>
</dbReference>
<dbReference type="RefSeq" id="WP_015869210.1">
    <property type="nucleotide sequence ID" value="NC_012785.1"/>
</dbReference>
<dbReference type="SMR" id="C5CGI6"/>
<dbReference type="STRING" id="521045.Kole_1886"/>
<dbReference type="KEGG" id="kol:Kole_1886"/>
<dbReference type="eggNOG" id="COG0256">
    <property type="taxonomic scope" value="Bacteria"/>
</dbReference>
<dbReference type="HOGENOM" id="CLU_098841_0_1_0"/>
<dbReference type="OrthoDB" id="9810939at2"/>
<dbReference type="Proteomes" id="UP000002382">
    <property type="component" value="Chromosome"/>
</dbReference>
<dbReference type="GO" id="GO:0022625">
    <property type="term" value="C:cytosolic large ribosomal subunit"/>
    <property type="evidence" value="ECO:0007669"/>
    <property type="project" value="TreeGrafter"/>
</dbReference>
<dbReference type="GO" id="GO:0008097">
    <property type="term" value="F:5S rRNA binding"/>
    <property type="evidence" value="ECO:0007669"/>
    <property type="project" value="TreeGrafter"/>
</dbReference>
<dbReference type="GO" id="GO:0003735">
    <property type="term" value="F:structural constituent of ribosome"/>
    <property type="evidence" value="ECO:0007669"/>
    <property type="project" value="InterPro"/>
</dbReference>
<dbReference type="GO" id="GO:0006412">
    <property type="term" value="P:translation"/>
    <property type="evidence" value="ECO:0007669"/>
    <property type="project" value="UniProtKB-UniRule"/>
</dbReference>
<dbReference type="CDD" id="cd00432">
    <property type="entry name" value="Ribosomal_L18_L5e"/>
    <property type="match status" value="1"/>
</dbReference>
<dbReference type="FunFam" id="3.30.420.100:FF:000001">
    <property type="entry name" value="50S ribosomal protein L18"/>
    <property type="match status" value="1"/>
</dbReference>
<dbReference type="Gene3D" id="3.30.420.100">
    <property type="match status" value="1"/>
</dbReference>
<dbReference type="HAMAP" id="MF_01337_B">
    <property type="entry name" value="Ribosomal_uL18_B"/>
    <property type="match status" value="1"/>
</dbReference>
<dbReference type="InterPro" id="IPR004389">
    <property type="entry name" value="Ribosomal_uL18_bac-type"/>
</dbReference>
<dbReference type="InterPro" id="IPR005484">
    <property type="entry name" value="Ribosomal_uL18_bac/euk"/>
</dbReference>
<dbReference type="NCBIfam" id="TIGR00060">
    <property type="entry name" value="L18_bact"/>
    <property type="match status" value="1"/>
</dbReference>
<dbReference type="PANTHER" id="PTHR12899">
    <property type="entry name" value="39S RIBOSOMAL PROTEIN L18, MITOCHONDRIAL"/>
    <property type="match status" value="1"/>
</dbReference>
<dbReference type="PANTHER" id="PTHR12899:SF3">
    <property type="entry name" value="LARGE RIBOSOMAL SUBUNIT PROTEIN UL18M"/>
    <property type="match status" value="1"/>
</dbReference>
<dbReference type="Pfam" id="PF00861">
    <property type="entry name" value="Ribosomal_L18p"/>
    <property type="match status" value="1"/>
</dbReference>
<dbReference type="SUPFAM" id="SSF53137">
    <property type="entry name" value="Translational machinery components"/>
    <property type="match status" value="1"/>
</dbReference>